<feature type="chain" id="PRO_1000080765" description="Transcriptional repressor NrdR">
    <location>
        <begin position="1"/>
        <end position="154"/>
    </location>
</feature>
<feature type="domain" description="ATP-cone" evidence="1">
    <location>
        <begin position="49"/>
        <end position="139"/>
    </location>
</feature>
<feature type="zinc finger region" evidence="1">
    <location>
        <begin position="3"/>
        <end position="34"/>
    </location>
</feature>
<feature type="region of interest" description="Disordered" evidence="2">
    <location>
        <begin position="1"/>
        <end position="22"/>
    </location>
</feature>
<protein>
    <recommendedName>
        <fullName evidence="1">Transcriptional repressor NrdR</fullName>
    </recommendedName>
</protein>
<comment type="function">
    <text evidence="1">Negatively regulates transcription of bacterial ribonucleotide reductase nrd genes and operons by binding to NrdR-boxes.</text>
</comment>
<comment type="cofactor">
    <cofactor evidence="1">
        <name>Zn(2+)</name>
        <dbReference type="ChEBI" id="CHEBI:29105"/>
    </cofactor>
    <text evidence="1">Binds 1 zinc ion.</text>
</comment>
<comment type="similarity">
    <text evidence="1">Belongs to the NrdR family.</text>
</comment>
<name>NRDR_LACGA</name>
<dbReference type="EMBL" id="CP000413">
    <property type="protein sequence ID" value="ABJ60779.1"/>
    <property type="molecule type" value="Genomic_DNA"/>
</dbReference>
<dbReference type="RefSeq" id="WP_003646909.1">
    <property type="nucleotide sequence ID" value="NZ_WBMG01000003.1"/>
</dbReference>
<dbReference type="SMR" id="Q041U3"/>
<dbReference type="GeneID" id="29639154"/>
<dbReference type="KEGG" id="lga:LGAS_1418"/>
<dbReference type="HOGENOM" id="CLU_108412_0_0_9"/>
<dbReference type="BioCyc" id="LGAS324831:G1G6Y-1412-MONOMER"/>
<dbReference type="Proteomes" id="UP000000664">
    <property type="component" value="Chromosome"/>
</dbReference>
<dbReference type="GO" id="GO:0005524">
    <property type="term" value="F:ATP binding"/>
    <property type="evidence" value="ECO:0007669"/>
    <property type="project" value="UniProtKB-KW"/>
</dbReference>
<dbReference type="GO" id="GO:0003677">
    <property type="term" value="F:DNA binding"/>
    <property type="evidence" value="ECO:0007669"/>
    <property type="project" value="UniProtKB-KW"/>
</dbReference>
<dbReference type="GO" id="GO:0008270">
    <property type="term" value="F:zinc ion binding"/>
    <property type="evidence" value="ECO:0007669"/>
    <property type="project" value="UniProtKB-UniRule"/>
</dbReference>
<dbReference type="GO" id="GO:0045892">
    <property type="term" value="P:negative regulation of DNA-templated transcription"/>
    <property type="evidence" value="ECO:0007669"/>
    <property type="project" value="UniProtKB-UniRule"/>
</dbReference>
<dbReference type="HAMAP" id="MF_00440">
    <property type="entry name" value="NrdR"/>
    <property type="match status" value="1"/>
</dbReference>
<dbReference type="InterPro" id="IPR005144">
    <property type="entry name" value="ATP-cone_dom"/>
</dbReference>
<dbReference type="InterPro" id="IPR055173">
    <property type="entry name" value="NrdR-like_N"/>
</dbReference>
<dbReference type="InterPro" id="IPR003796">
    <property type="entry name" value="RNR_NrdR-like"/>
</dbReference>
<dbReference type="NCBIfam" id="TIGR00244">
    <property type="entry name" value="transcriptional regulator NrdR"/>
    <property type="match status" value="1"/>
</dbReference>
<dbReference type="PANTHER" id="PTHR30455">
    <property type="entry name" value="TRANSCRIPTIONAL REPRESSOR NRDR"/>
    <property type="match status" value="1"/>
</dbReference>
<dbReference type="PANTHER" id="PTHR30455:SF2">
    <property type="entry name" value="TRANSCRIPTIONAL REPRESSOR NRDR"/>
    <property type="match status" value="1"/>
</dbReference>
<dbReference type="Pfam" id="PF03477">
    <property type="entry name" value="ATP-cone"/>
    <property type="match status" value="1"/>
</dbReference>
<dbReference type="Pfam" id="PF22811">
    <property type="entry name" value="Zn_ribbon_NrdR"/>
    <property type="match status" value="1"/>
</dbReference>
<dbReference type="PROSITE" id="PS51161">
    <property type="entry name" value="ATP_CONE"/>
    <property type="match status" value="1"/>
</dbReference>
<proteinExistence type="inferred from homology"/>
<reference key="1">
    <citation type="journal article" date="2006" name="Proc. Natl. Acad. Sci. U.S.A.">
        <title>Comparative genomics of the lactic acid bacteria.</title>
        <authorList>
            <person name="Makarova K.S."/>
            <person name="Slesarev A."/>
            <person name="Wolf Y.I."/>
            <person name="Sorokin A."/>
            <person name="Mirkin B."/>
            <person name="Koonin E.V."/>
            <person name="Pavlov A."/>
            <person name="Pavlova N."/>
            <person name="Karamychev V."/>
            <person name="Polouchine N."/>
            <person name="Shakhova V."/>
            <person name="Grigoriev I."/>
            <person name="Lou Y."/>
            <person name="Rohksar D."/>
            <person name="Lucas S."/>
            <person name="Huang K."/>
            <person name="Goodstein D.M."/>
            <person name="Hawkins T."/>
            <person name="Plengvidhya V."/>
            <person name="Welker D."/>
            <person name="Hughes J."/>
            <person name="Goh Y."/>
            <person name="Benson A."/>
            <person name="Baldwin K."/>
            <person name="Lee J.-H."/>
            <person name="Diaz-Muniz I."/>
            <person name="Dosti B."/>
            <person name="Smeianov V."/>
            <person name="Wechter W."/>
            <person name="Barabote R."/>
            <person name="Lorca G."/>
            <person name="Altermann E."/>
            <person name="Barrangou R."/>
            <person name="Ganesan B."/>
            <person name="Xie Y."/>
            <person name="Rawsthorne H."/>
            <person name="Tamir D."/>
            <person name="Parker C."/>
            <person name="Breidt F."/>
            <person name="Broadbent J.R."/>
            <person name="Hutkins R."/>
            <person name="O'Sullivan D."/>
            <person name="Steele J."/>
            <person name="Unlu G."/>
            <person name="Saier M.H. Jr."/>
            <person name="Klaenhammer T."/>
            <person name="Richardson P."/>
            <person name="Kozyavkin S."/>
            <person name="Weimer B.C."/>
            <person name="Mills D.A."/>
        </authorList>
    </citation>
    <scope>NUCLEOTIDE SEQUENCE [LARGE SCALE GENOMIC DNA]</scope>
    <source>
        <strain>ATCC 33323 / DSM 20243 / BCRC 14619 / CIP 102991 / JCM 1131 / KCTC 3163 / NCIMB 11718 / NCTC 13722 / AM63</strain>
    </source>
</reference>
<gene>
    <name evidence="1" type="primary">nrdR</name>
    <name type="ordered locus">LGAS_1418</name>
</gene>
<sequence length="154" mass="17896">MECPNCHKNASRVIDSRPSDENRAIRRRRECENCGFRFTTFERVERSPLLVIKNDGTREAFNRDKILHGVMMAAQKRPISSEQLDTLVDHVENEIRKQGLNEISSKDIGNLVMKELANLDDVAYIRFASIYRQFKDVSGFMEAMEDMMAKHDKE</sequence>
<keyword id="KW-0067">ATP-binding</keyword>
<keyword id="KW-0238">DNA-binding</keyword>
<keyword id="KW-0479">Metal-binding</keyword>
<keyword id="KW-0547">Nucleotide-binding</keyword>
<keyword id="KW-0678">Repressor</keyword>
<keyword id="KW-0804">Transcription</keyword>
<keyword id="KW-0805">Transcription regulation</keyword>
<keyword id="KW-0862">Zinc</keyword>
<keyword id="KW-0863">Zinc-finger</keyword>
<organism>
    <name type="scientific">Lactobacillus gasseri (strain ATCC 33323 / DSM 20243 / BCRC 14619 / CIP 102991 / JCM 1131 / KCTC 3163 / NCIMB 11718 / NCTC 13722 / AM63)</name>
    <dbReference type="NCBI Taxonomy" id="324831"/>
    <lineage>
        <taxon>Bacteria</taxon>
        <taxon>Bacillati</taxon>
        <taxon>Bacillota</taxon>
        <taxon>Bacilli</taxon>
        <taxon>Lactobacillales</taxon>
        <taxon>Lactobacillaceae</taxon>
        <taxon>Lactobacillus</taxon>
    </lineage>
</organism>
<evidence type="ECO:0000255" key="1">
    <source>
        <dbReference type="HAMAP-Rule" id="MF_00440"/>
    </source>
</evidence>
<evidence type="ECO:0000256" key="2">
    <source>
        <dbReference type="SAM" id="MobiDB-lite"/>
    </source>
</evidence>
<accession>Q041U3</accession>